<evidence type="ECO:0000255" key="1">
    <source>
        <dbReference type="HAMAP-Rule" id="MF_01516"/>
    </source>
</evidence>
<accession>B5F7L9</accession>
<dbReference type="EC" id="1.1.1.37" evidence="1"/>
<dbReference type="EMBL" id="CP001138">
    <property type="protein sequence ID" value="ACH48716.1"/>
    <property type="molecule type" value="Genomic_DNA"/>
</dbReference>
<dbReference type="RefSeq" id="WP_000861586.1">
    <property type="nucleotide sequence ID" value="NC_011149.1"/>
</dbReference>
<dbReference type="SMR" id="B5F7L9"/>
<dbReference type="KEGG" id="sea:SeAg_B3550"/>
<dbReference type="HOGENOM" id="CLU_047181_1_0_6"/>
<dbReference type="Proteomes" id="UP000008819">
    <property type="component" value="Chromosome"/>
</dbReference>
<dbReference type="GO" id="GO:0005737">
    <property type="term" value="C:cytoplasm"/>
    <property type="evidence" value="ECO:0007669"/>
    <property type="project" value="TreeGrafter"/>
</dbReference>
<dbReference type="GO" id="GO:0030060">
    <property type="term" value="F:L-malate dehydrogenase (NAD+) activity"/>
    <property type="evidence" value="ECO:0007669"/>
    <property type="project" value="UniProtKB-UniRule"/>
</dbReference>
<dbReference type="GO" id="GO:0006108">
    <property type="term" value="P:malate metabolic process"/>
    <property type="evidence" value="ECO:0007669"/>
    <property type="project" value="InterPro"/>
</dbReference>
<dbReference type="GO" id="GO:0006099">
    <property type="term" value="P:tricarboxylic acid cycle"/>
    <property type="evidence" value="ECO:0007669"/>
    <property type="project" value="UniProtKB-UniRule"/>
</dbReference>
<dbReference type="CDD" id="cd01337">
    <property type="entry name" value="MDH_glyoxysomal_mitochondrial"/>
    <property type="match status" value="1"/>
</dbReference>
<dbReference type="FunFam" id="3.40.50.720:FF:000017">
    <property type="entry name" value="Malate dehydrogenase"/>
    <property type="match status" value="1"/>
</dbReference>
<dbReference type="FunFam" id="3.90.110.10:FF:000001">
    <property type="entry name" value="Malate dehydrogenase"/>
    <property type="match status" value="1"/>
</dbReference>
<dbReference type="Gene3D" id="3.90.110.10">
    <property type="entry name" value="Lactate dehydrogenase/glycoside hydrolase, family 4, C-terminal"/>
    <property type="match status" value="1"/>
</dbReference>
<dbReference type="Gene3D" id="3.40.50.720">
    <property type="entry name" value="NAD(P)-binding Rossmann-like Domain"/>
    <property type="match status" value="1"/>
</dbReference>
<dbReference type="HAMAP" id="MF_01516">
    <property type="entry name" value="Malate_dehydrog_1"/>
    <property type="match status" value="1"/>
</dbReference>
<dbReference type="InterPro" id="IPR001557">
    <property type="entry name" value="L-lactate/malate_DH"/>
</dbReference>
<dbReference type="InterPro" id="IPR022383">
    <property type="entry name" value="Lactate/malate_DH_C"/>
</dbReference>
<dbReference type="InterPro" id="IPR001236">
    <property type="entry name" value="Lactate/malate_DH_N"/>
</dbReference>
<dbReference type="InterPro" id="IPR015955">
    <property type="entry name" value="Lactate_DH/Glyco_Ohase_4_C"/>
</dbReference>
<dbReference type="InterPro" id="IPR001252">
    <property type="entry name" value="Malate_DH_AS"/>
</dbReference>
<dbReference type="InterPro" id="IPR010097">
    <property type="entry name" value="Malate_DH_type1"/>
</dbReference>
<dbReference type="InterPro" id="IPR023958">
    <property type="entry name" value="Malate_DH_type1_bac"/>
</dbReference>
<dbReference type="InterPro" id="IPR036291">
    <property type="entry name" value="NAD(P)-bd_dom_sf"/>
</dbReference>
<dbReference type="NCBIfam" id="TIGR01772">
    <property type="entry name" value="MDH_euk_gproteo"/>
    <property type="match status" value="1"/>
</dbReference>
<dbReference type="PANTHER" id="PTHR11540">
    <property type="entry name" value="MALATE AND LACTATE DEHYDROGENASE"/>
    <property type="match status" value="1"/>
</dbReference>
<dbReference type="PANTHER" id="PTHR11540:SF16">
    <property type="entry name" value="MALATE DEHYDROGENASE, MITOCHONDRIAL"/>
    <property type="match status" value="1"/>
</dbReference>
<dbReference type="Pfam" id="PF02866">
    <property type="entry name" value="Ldh_1_C"/>
    <property type="match status" value="1"/>
</dbReference>
<dbReference type="Pfam" id="PF00056">
    <property type="entry name" value="Ldh_1_N"/>
    <property type="match status" value="1"/>
</dbReference>
<dbReference type="PIRSF" id="PIRSF000102">
    <property type="entry name" value="Lac_mal_DH"/>
    <property type="match status" value="1"/>
</dbReference>
<dbReference type="SUPFAM" id="SSF56327">
    <property type="entry name" value="LDH C-terminal domain-like"/>
    <property type="match status" value="1"/>
</dbReference>
<dbReference type="SUPFAM" id="SSF51735">
    <property type="entry name" value="NAD(P)-binding Rossmann-fold domains"/>
    <property type="match status" value="1"/>
</dbReference>
<dbReference type="PROSITE" id="PS00068">
    <property type="entry name" value="MDH"/>
    <property type="match status" value="1"/>
</dbReference>
<proteinExistence type="inferred from homology"/>
<keyword id="KW-0520">NAD</keyword>
<keyword id="KW-0560">Oxidoreductase</keyword>
<keyword id="KW-0816">Tricarboxylic acid cycle</keyword>
<sequence length="312" mass="32476">MKVAVLGAAGGIGQALALLLKNQLPSGSELSLYDIAPVTPGVAVDLSHIPTAVKIKGFSGEDATPALEGADVVLISAGVARKPGMDRSDLFNVNAGIVKNLVQQIAKTCPKACVGIITNPVNTTVAIAAEVLKKAGVYDKNKLFGVTTLDIIRSNTFVAELKGKLPTEVEVPVIGGHSGVTILPLLSQIPGVSFTEQEAAELTKRIQNAGTEVVEAKAGGGSATLSMGQAAARFGLSLVRALQGEKGVVECAYVEGDGQYARFFSQPLLLGKNGVEERKSIGTLSAFEQHSLDAMLDTLKKDIQLGEDFINK</sequence>
<organism>
    <name type="scientific">Salmonella agona (strain SL483)</name>
    <dbReference type="NCBI Taxonomy" id="454166"/>
    <lineage>
        <taxon>Bacteria</taxon>
        <taxon>Pseudomonadati</taxon>
        <taxon>Pseudomonadota</taxon>
        <taxon>Gammaproteobacteria</taxon>
        <taxon>Enterobacterales</taxon>
        <taxon>Enterobacteriaceae</taxon>
        <taxon>Salmonella</taxon>
    </lineage>
</organism>
<gene>
    <name evidence="1" type="primary">mdh</name>
    <name type="ordered locus">SeAg_B3550</name>
</gene>
<name>MDH_SALA4</name>
<reference key="1">
    <citation type="journal article" date="2011" name="J. Bacteriol.">
        <title>Comparative genomics of 28 Salmonella enterica isolates: evidence for CRISPR-mediated adaptive sublineage evolution.</title>
        <authorList>
            <person name="Fricke W.F."/>
            <person name="Mammel M.K."/>
            <person name="McDermott P.F."/>
            <person name="Tartera C."/>
            <person name="White D.G."/>
            <person name="Leclerc J.E."/>
            <person name="Ravel J."/>
            <person name="Cebula T.A."/>
        </authorList>
    </citation>
    <scope>NUCLEOTIDE SEQUENCE [LARGE SCALE GENOMIC DNA]</scope>
    <source>
        <strain>SL483</strain>
    </source>
</reference>
<protein>
    <recommendedName>
        <fullName evidence="1">Malate dehydrogenase</fullName>
        <ecNumber evidence="1">1.1.1.37</ecNumber>
    </recommendedName>
</protein>
<comment type="function">
    <text evidence="1">Catalyzes the reversible oxidation of malate to oxaloacetate.</text>
</comment>
<comment type="catalytic activity">
    <reaction evidence="1">
        <text>(S)-malate + NAD(+) = oxaloacetate + NADH + H(+)</text>
        <dbReference type="Rhea" id="RHEA:21432"/>
        <dbReference type="ChEBI" id="CHEBI:15378"/>
        <dbReference type="ChEBI" id="CHEBI:15589"/>
        <dbReference type="ChEBI" id="CHEBI:16452"/>
        <dbReference type="ChEBI" id="CHEBI:57540"/>
        <dbReference type="ChEBI" id="CHEBI:57945"/>
        <dbReference type="EC" id="1.1.1.37"/>
    </reaction>
</comment>
<comment type="subunit">
    <text evidence="1">Homodimer.</text>
</comment>
<comment type="similarity">
    <text evidence="1">Belongs to the LDH/MDH superfamily. MDH type 1 family.</text>
</comment>
<feature type="chain" id="PRO_1000191589" description="Malate dehydrogenase">
    <location>
        <begin position="1"/>
        <end position="312"/>
    </location>
</feature>
<feature type="active site" description="Proton acceptor" evidence="1">
    <location>
        <position position="177"/>
    </location>
</feature>
<feature type="binding site" evidence="1">
    <location>
        <begin position="7"/>
        <end position="13"/>
    </location>
    <ligand>
        <name>NAD(+)</name>
        <dbReference type="ChEBI" id="CHEBI:57540"/>
    </ligand>
</feature>
<feature type="binding site" evidence="1">
    <location>
        <position position="34"/>
    </location>
    <ligand>
        <name>NAD(+)</name>
        <dbReference type="ChEBI" id="CHEBI:57540"/>
    </ligand>
</feature>
<feature type="binding site" evidence="1">
    <location>
        <position position="81"/>
    </location>
    <ligand>
        <name>substrate</name>
    </ligand>
</feature>
<feature type="binding site" evidence="1">
    <location>
        <position position="87"/>
    </location>
    <ligand>
        <name>substrate</name>
    </ligand>
</feature>
<feature type="binding site" evidence="1">
    <location>
        <position position="94"/>
    </location>
    <ligand>
        <name>NAD(+)</name>
        <dbReference type="ChEBI" id="CHEBI:57540"/>
    </ligand>
</feature>
<feature type="binding site" evidence="1">
    <location>
        <begin position="117"/>
        <end position="119"/>
    </location>
    <ligand>
        <name>NAD(+)</name>
        <dbReference type="ChEBI" id="CHEBI:57540"/>
    </ligand>
</feature>
<feature type="binding site" evidence="1">
    <location>
        <position position="119"/>
    </location>
    <ligand>
        <name>substrate</name>
    </ligand>
</feature>
<feature type="binding site" evidence="1">
    <location>
        <position position="153"/>
    </location>
    <ligand>
        <name>substrate</name>
    </ligand>
</feature>
<feature type="binding site" evidence="1">
    <location>
        <position position="227"/>
    </location>
    <ligand>
        <name>NAD(+)</name>
        <dbReference type="ChEBI" id="CHEBI:57540"/>
    </ligand>
</feature>